<accession>Q9LI83</accession>
<comment type="function">
    <text evidence="5">Involved in transport of phospholipids.</text>
</comment>
<comment type="catalytic activity">
    <reaction evidence="5">
        <text>ATP + H2O + phospholipidSide 1 = ADP + phosphate + phospholipidSide 2.</text>
        <dbReference type="EC" id="7.6.2.1"/>
    </reaction>
</comment>
<comment type="subcellular location">
    <subcellularLocation>
        <location evidence="6">Cell membrane</location>
        <topology evidence="6">Multi-pass membrane protein</topology>
    </subcellularLocation>
</comment>
<comment type="similarity">
    <text evidence="4">Belongs to the cation transport ATPase (P-type) (TC 3.A.3) family. Type IV subfamily.</text>
</comment>
<keyword id="KW-0067">ATP-binding</keyword>
<keyword id="KW-1003">Cell membrane</keyword>
<keyword id="KW-0460">Magnesium</keyword>
<keyword id="KW-0472">Membrane</keyword>
<keyword id="KW-0479">Metal-binding</keyword>
<keyword id="KW-0547">Nucleotide-binding</keyword>
<keyword id="KW-1185">Reference proteome</keyword>
<keyword id="KW-1278">Translocase</keyword>
<keyword id="KW-0812">Transmembrane</keyword>
<keyword id="KW-1133">Transmembrane helix</keyword>
<organism>
    <name type="scientific">Arabidopsis thaliana</name>
    <name type="common">Mouse-ear cress</name>
    <dbReference type="NCBI Taxonomy" id="3702"/>
    <lineage>
        <taxon>Eukaryota</taxon>
        <taxon>Viridiplantae</taxon>
        <taxon>Streptophyta</taxon>
        <taxon>Embryophyta</taxon>
        <taxon>Tracheophyta</taxon>
        <taxon>Spermatophyta</taxon>
        <taxon>Magnoliopsida</taxon>
        <taxon>eudicotyledons</taxon>
        <taxon>Gunneridae</taxon>
        <taxon>Pentapetalae</taxon>
        <taxon>rosids</taxon>
        <taxon>malvids</taxon>
        <taxon>Brassicales</taxon>
        <taxon>Brassicaceae</taxon>
        <taxon>Camelineae</taxon>
        <taxon>Arabidopsis</taxon>
    </lineage>
</organism>
<proteinExistence type="inferred from homology"/>
<gene>
    <name evidence="3" type="primary">ALA10</name>
    <name evidence="7" type="ordered locus">At3g25610</name>
    <name evidence="8" type="ORF">T5M7.5</name>
</gene>
<reference key="1">
    <citation type="journal article" date="2000" name="DNA Res.">
        <title>Structural analysis of Arabidopsis thaliana chromosome 3. II. Sequence features of the 4,251,695 bp regions covered by 90 P1, TAC and BAC clones.</title>
        <authorList>
            <person name="Kaneko T."/>
            <person name="Katoh T."/>
            <person name="Sato S."/>
            <person name="Nakamura Y."/>
            <person name="Asamizu E."/>
            <person name="Tabata S."/>
        </authorList>
    </citation>
    <scope>NUCLEOTIDE SEQUENCE [LARGE SCALE GENOMIC DNA]</scope>
    <source>
        <strain>cv. Columbia</strain>
    </source>
</reference>
<reference key="2">
    <citation type="journal article" date="2017" name="Plant J.">
        <title>Araport11: a complete reannotation of the Arabidopsis thaliana reference genome.</title>
        <authorList>
            <person name="Cheng C.Y."/>
            <person name="Krishnakumar V."/>
            <person name="Chan A.P."/>
            <person name="Thibaud-Nissen F."/>
            <person name="Schobel S."/>
            <person name="Town C.D."/>
        </authorList>
    </citation>
    <scope>GENOME REANNOTATION</scope>
    <source>
        <strain>cv. Columbia</strain>
    </source>
</reference>
<reference key="3">
    <citation type="journal article" date="2001" name="Plant Physiol.">
        <title>Inventory of the superfamily of P-type ion pumps in Arabidopsis.</title>
        <authorList>
            <person name="Axelsen K.B."/>
            <person name="Palmgren M.G."/>
        </authorList>
    </citation>
    <scope>GENE FAMILY</scope>
    <scope>NOMENCLATURE</scope>
</reference>
<reference key="4">
    <citation type="journal article" date="2004" name="Plant Cell">
        <title>Phosphoproteomics of the Arabidopsis plasma membrane and a new phosphorylation site database.</title>
        <authorList>
            <person name="Nuehse T.S."/>
            <person name="Stensballe A."/>
            <person name="Jensen O.N."/>
            <person name="Peck S.C."/>
        </authorList>
    </citation>
    <scope>SUBCELLULAR LOCATION</scope>
</reference>
<evidence type="ECO:0000250" key="1"/>
<evidence type="ECO:0000255" key="2"/>
<evidence type="ECO:0000303" key="3">
    <source>
    </source>
</evidence>
<evidence type="ECO:0000305" key="4"/>
<evidence type="ECO:0000305" key="5">
    <source>
    </source>
</evidence>
<evidence type="ECO:0000305" key="6">
    <source>
    </source>
</evidence>
<evidence type="ECO:0000312" key="7">
    <source>
        <dbReference type="Araport" id="AT3G25610"/>
    </source>
</evidence>
<evidence type="ECO:0000312" key="8">
    <source>
        <dbReference type="EMBL" id="BAB03080.1"/>
    </source>
</evidence>
<protein>
    <recommendedName>
        <fullName evidence="3">Phospholipid-transporting ATPase 10</fullName>
        <shortName evidence="3">AtALA10</shortName>
        <ecNumber evidence="5">7.6.2.1</ecNumber>
    </recommendedName>
    <alternativeName>
        <fullName evidence="3">Aminophospholipid flippase 10</fullName>
    </alternativeName>
</protein>
<feature type="chain" id="PRO_0000046394" description="Phospholipid-transporting ATPase 10">
    <location>
        <begin position="1"/>
        <end position="1202"/>
    </location>
</feature>
<feature type="topological domain" description="Cytoplasmic" evidence="2">
    <location>
        <begin position="1"/>
        <end position="73"/>
    </location>
</feature>
<feature type="transmembrane region" description="Helical" evidence="2">
    <location>
        <begin position="74"/>
        <end position="95"/>
    </location>
</feature>
<feature type="topological domain" description="Extracellular" evidence="2">
    <location>
        <begin position="96"/>
        <end position="99"/>
    </location>
</feature>
<feature type="transmembrane region" description="Helical" evidence="2">
    <location>
        <begin position="100"/>
        <end position="122"/>
    </location>
</feature>
<feature type="topological domain" description="Cytoplasmic" evidence="2">
    <location>
        <begin position="123"/>
        <end position="305"/>
    </location>
</feature>
<feature type="transmembrane region" description="Helical" evidence="2">
    <location>
        <begin position="306"/>
        <end position="327"/>
    </location>
</feature>
<feature type="topological domain" description="Extracellular" evidence="2">
    <location>
        <begin position="328"/>
        <end position="364"/>
    </location>
</feature>
<feature type="transmembrane region" description="Helical" evidence="2">
    <location>
        <begin position="365"/>
        <end position="382"/>
    </location>
</feature>
<feature type="topological domain" description="Cytoplasmic" evidence="2">
    <location>
        <begin position="383"/>
        <end position="920"/>
    </location>
</feature>
<feature type="transmembrane region" description="Helical" evidence="2">
    <location>
        <begin position="921"/>
        <end position="940"/>
    </location>
</feature>
<feature type="topological domain" description="Extracellular" evidence="2">
    <location>
        <begin position="941"/>
        <end position="954"/>
    </location>
</feature>
<feature type="transmembrane region" description="Helical" evidence="2">
    <location>
        <begin position="955"/>
        <end position="974"/>
    </location>
</feature>
<feature type="topological domain" description="Cytoplasmic" evidence="2">
    <location>
        <begin position="975"/>
        <end position="1004"/>
    </location>
</feature>
<feature type="transmembrane region" description="Helical" evidence="2">
    <location>
        <begin position="1005"/>
        <end position="1027"/>
    </location>
</feature>
<feature type="topological domain" description="Extracellular" evidence="2">
    <location>
        <begin position="1028"/>
        <end position="1040"/>
    </location>
</feature>
<feature type="transmembrane region" description="Helical" evidence="2">
    <location>
        <begin position="1041"/>
        <end position="1063"/>
    </location>
</feature>
<feature type="topological domain" description="Cytoplasmic" evidence="2">
    <location>
        <begin position="1064"/>
        <end position="1069"/>
    </location>
</feature>
<feature type="transmembrane region" description="Helical" evidence="2">
    <location>
        <begin position="1070"/>
        <end position="1090"/>
    </location>
</feature>
<feature type="topological domain" description="Extracellular" evidence="2">
    <location>
        <begin position="1091"/>
        <end position="1107"/>
    </location>
</feature>
<feature type="transmembrane region" description="Helical" evidence="2">
    <location>
        <begin position="1108"/>
        <end position="1132"/>
    </location>
</feature>
<feature type="topological domain" description="Cytoplasmic" evidence="2">
    <location>
        <begin position="1133"/>
        <end position="1202"/>
    </location>
</feature>
<feature type="active site" description="4-aspartylphosphate intermediate" evidence="1">
    <location>
        <position position="430"/>
    </location>
</feature>
<feature type="binding site" evidence="1">
    <location>
        <position position="865"/>
    </location>
    <ligand>
        <name>Mg(2+)</name>
        <dbReference type="ChEBI" id="CHEBI:18420"/>
    </ligand>
</feature>
<feature type="binding site" evidence="1">
    <location>
        <position position="869"/>
    </location>
    <ligand>
        <name>Mg(2+)</name>
        <dbReference type="ChEBI" id="CHEBI:18420"/>
    </ligand>
</feature>
<dbReference type="EC" id="7.6.2.1" evidence="5"/>
<dbReference type="EMBL" id="AP001313">
    <property type="protein sequence ID" value="BAB03080.1"/>
    <property type="molecule type" value="Genomic_DNA"/>
</dbReference>
<dbReference type="EMBL" id="CP002686">
    <property type="protein sequence ID" value="AEE77042.1"/>
    <property type="molecule type" value="Genomic_DNA"/>
</dbReference>
<dbReference type="RefSeq" id="NP_189189.1">
    <property type="nucleotide sequence ID" value="NM_113459.2"/>
</dbReference>
<dbReference type="SMR" id="Q9LI83"/>
<dbReference type="BioGRID" id="7479">
    <property type="interactions" value="3"/>
</dbReference>
<dbReference type="FunCoup" id="Q9LI83">
    <property type="interactions" value="572"/>
</dbReference>
<dbReference type="STRING" id="3702.Q9LI83"/>
<dbReference type="TCDB" id="3.A.3.8.24">
    <property type="family name" value="the p-type atpase (p-atpase) superfamily"/>
</dbReference>
<dbReference type="iPTMnet" id="Q9LI83"/>
<dbReference type="PaxDb" id="3702-AT3G25610.1"/>
<dbReference type="ProteomicsDB" id="244810"/>
<dbReference type="EnsemblPlants" id="AT3G25610.1">
    <property type="protein sequence ID" value="AT3G25610.1"/>
    <property type="gene ID" value="AT3G25610"/>
</dbReference>
<dbReference type="GeneID" id="822148"/>
<dbReference type="Gramene" id="AT3G25610.1">
    <property type="protein sequence ID" value="AT3G25610.1"/>
    <property type="gene ID" value="AT3G25610"/>
</dbReference>
<dbReference type="KEGG" id="ath:AT3G25610"/>
<dbReference type="Araport" id="AT3G25610"/>
<dbReference type="TAIR" id="AT3G25610">
    <property type="gene designation" value="ALA10"/>
</dbReference>
<dbReference type="eggNOG" id="KOG0206">
    <property type="taxonomic scope" value="Eukaryota"/>
</dbReference>
<dbReference type="HOGENOM" id="CLU_000846_5_2_1"/>
<dbReference type="InParanoid" id="Q9LI83"/>
<dbReference type="OMA" id="FAIMTCH"/>
<dbReference type="PhylomeDB" id="Q9LI83"/>
<dbReference type="BioCyc" id="ARA:AT3G25610-MONOMER"/>
<dbReference type="PRO" id="PR:Q9LI83"/>
<dbReference type="Proteomes" id="UP000006548">
    <property type="component" value="Chromosome 3"/>
</dbReference>
<dbReference type="ExpressionAtlas" id="Q9LI83">
    <property type="expression patterns" value="baseline and differential"/>
</dbReference>
<dbReference type="GO" id="GO:0005886">
    <property type="term" value="C:plasma membrane"/>
    <property type="evidence" value="ECO:0000314"/>
    <property type="project" value="TAIR"/>
</dbReference>
<dbReference type="GO" id="GO:0005524">
    <property type="term" value="F:ATP binding"/>
    <property type="evidence" value="ECO:0007669"/>
    <property type="project" value="UniProtKB-KW"/>
</dbReference>
<dbReference type="GO" id="GO:0016887">
    <property type="term" value="F:ATP hydrolysis activity"/>
    <property type="evidence" value="ECO:0007669"/>
    <property type="project" value="InterPro"/>
</dbReference>
<dbReference type="GO" id="GO:0140333">
    <property type="term" value="F:glycerophospholipid flippase activity"/>
    <property type="evidence" value="ECO:0000314"/>
    <property type="project" value="TAIR"/>
</dbReference>
<dbReference type="GO" id="GO:0000287">
    <property type="term" value="F:magnesium ion binding"/>
    <property type="evidence" value="ECO:0007669"/>
    <property type="project" value="InterPro"/>
</dbReference>
<dbReference type="GO" id="GO:0090554">
    <property type="term" value="F:phosphatidylcholine floppase activity"/>
    <property type="evidence" value="ECO:0000314"/>
    <property type="project" value="TAIR"/>
</dbReference>
<dbReference type="GO" id="GO:1901703">
    <property type="term" value="P:protein localization involved in auxin polar transport"/>
    <property type="evidence" value="ECO:0000316"/>
    <property type="project" value="TAIR"/>
</dbReference>
<dbReference type="CDD" id="cd02073">
    <property type="entry name" value="P-type_ATPase_APLT_Dnf-like"/>
    <property type="match status" value="1"/>
</dbReference>
<dbReference type="FunFam" id="2.70.150.10:FF:000023">
    <property type="entry name" value="Phospholipid-transporting ATPase"/>
    <property type="match status" value="1"/>
</dbReference>
<dbReference type="FunFam" id="3.40.1110.10:FF:000042">
    <property type="entry name" value="Phospholipid-transporting ATPase"/>
    <property type="match status" value="1"/>
</dbReference>
<dbReference type="FunFam" id="3.40.50.1000:FF:000014">
    <property type="entry name" value="Phospholipid-transporting ATPase"/>
    <property type="match status" value="1"/>
</dbReference>
<dbReference type="Gene3D" id="3.40.1110.10">
    <property type="entry name" value="Calcium-transporting ATPase, cytoplasmic domain N"/>
    <property type="match status" value="1"/>
</dbReference>
<dbReference type="Gene3D" id="2.70.150.10">
    <property type="entry name" value="Calcium-transporting ATPase, cytoplasmic transduction domain A"/>
    <property type="match status" value="1"/>
</dbReference>
<dbReference type="Gene3D" id="3.40.50.1000">
    <property type="entry name" value="HAD superfamily/HAD-like"/>
    <property type="match status" value="1"/>
</dbReference>
<dbReference type="InterPro" id="IPR023299">
    <property type="entry name" value="ATPase_P-typ_cyto_dom_N"/>
</dbReference>
<dbReference type="InterPro" id="IPR018303">
    <property type="entry name" value="ATPase_P-typ_P_site"/>
</dbReference>
<dbReference type="InterPro" id="IPR023298">
    <property type="entry name" value="ATPase_P-typ_TM_dom_sf"/>
</dbReference>
<dbReference type="InterPro" id="IPR008250">
    <property type="entry name" value="ATPase_P-typ_transduc_dom_A_sf"/>
</dbReference>
<dbReference type="InterPro" id="IPR036412">
    <property type="entry name" value="HAD-like_sf"/>
</dbReference>
<dbReference type="InterPro" id="IPR023214">
    <property type="entry name" value="HAD_sf"/>
</dbReference>
<dbReference type="InterPro" id="IPR006539">
    <property type="entry name" value="P-type_ATPase_IV"/>
</dbReference>
<dbReference type="InterPro" id="IPR032631">
    <property type="entry name" value="P-type_ATPase_N"/>
</dbReference>
<dbReference type="InterPro" id="IPR001757">
    <property type="entry name" value="P_typ_ATPase"/>
</dbReference>
<dbReference type="InterPro" id="IPR032630">
    <property type="entry name" value="P_typ_ATPase_c"/>
</dbReference>
<dbReference type="InterPro" id="IPR044492">
    <property type="entry name" value="P_typ_ATPase_HD_dom"/>
</dbReference>
<dbReference type="NCBIfam" id="TIGR01652">
    <property type="entry name" value="ATPase-Plipid"/>
    <property type="match status" value="1"/>
</dbReference>
<dbReference type="NCBIfam" id="TIGR01494">
    <property type="entry name" value="ATPase_P-type"/>
    <property type="match status" value="1"/>
</dbReference>
<dbReference type="PANTHER" id="PTHR24092:SF144">
    <property type="entry name" value="PHOSPHOLIPID-TRANSPORTING ATPASE 10"/>
    <property type="match status" value="1"/>
</dbReference>
<dbReference type="PANTHER" id="PTHR24092">
    <property type="entry name" value="PROBABLE PHOSPHOLIPID-TRANSPORTING ATPASE"/>
    <property type="match status" value="1"/>
</dbReference>
<dbReference type="Pfam" id="PF13246">
    <property type="entry name" value="Cation_ATPase"/>
    <property type="match status" value="1"/>
</dbReference>
<dbReference type="Pfam" id="PF16212">
    <property type="entry name" value="PhoLip_ATPase_C"/>
    <property type="match status" value="1"/>
</dbReference>
<dbReference type="Pfam" id="PF16209">
    <property type="entry name" value="PhoLip_ATPase_N"/>
    <property type="match status" value="1"/>
</dbReference>
<dbReference type="PRINTS" id="PR00119">
    <property type="entry name" value="CATATPASE"/>
</dbReference>
<dbReference type="SFLD" id="SFLDG00002">
    <property type="entry name" value="C1.7:_P-type_atpase_like"/>
    <property type="match status" value="1"/>
</dbReference>
<dbReference type="SFLD" id="SFLDF00027">
    <property type="entry name" value="p-type_atpase"/>
    <property type="match status" value="1"/>
</dbReference>
<dbReference type="SUPFAM" id="SSF81653">
    <property type="entry name" value="Calcium ATPase, transduction domain A"/>
    <property type="match status" value="1"/>
</dbReference>
<dbReference type="SUPFAM" id="SSF81665">
    <property type="entry name" value="Calcium ATPase, transmembrane domain M"/>
    <property type="match status" value="1"/>
</dbReference>
<dbReference type="SUPFAM" id="SSF56784">
    <property type="entry name" value="HAD-like"/>
    <property type="match status" value="1"/>
</dbReference>
<dbReference type="SUPFAM" id="SSF81660">
    <property type="entry name" value="Metal cation-transporting ATPase, ATP-binding domain N"/>
    <property type="match status" value="1"/>
</dbReference>
<dbReference type="PROSITE" id="PS00154">
    <property type="entry name" value="ATPASE_E1_E2"/>
    <property type="match status" value="1"/>
</dbReference>
<sequence length="1202" mass="136279">MAGPSRRRRRLHLSKIYSYTCGKSSFQEDHSNIGGPGFSRVVYCNEPGSPAAERRNYAGNYVRSTKYTVASFFPKSLFEQFRRVANFYFLVTGILSLTDLSPYGAVSALLPLALVISATMVKEGIEDWRRKQQDIEVNNRKVKVHDGNGIFRQEEWRNLRVGDIVRVEKDEFFPADLLLLSSSYEDSVCYVETMNLDGETNLKVKQGLEATSSLLNQDSDFKDFRGVVRCEDPNVNLYVFVGTLALEEERFPLSIQQILLRDSKLRNTEYVYGAVVFTGHDTKVIQNSTDPPSKRSRIERTMDKIIYLMFGLVFLMSFVGSIIFGVETREDKVKNGRTERWYLKPDDADIFFDPERAPMAAIYHFFTATMLYSYFIPISLYVSIEIVKVLQSIFINRDIHMYYEETDKPAQARTSNLNEELGMVDTILSDKTGTLTCNSMEFIKCSIAGKAYGRGITEVERAMAVRSGGSPLVNEDLDVVVDQSGPKVKGFNFEDERVMNGNWVRQPEAAVLQKFFRLLAVCHTAIPETDEESGNVSYEAESPDEAAFVVAAREFGFEFFNRTQNGISFRELDLVSGEKVERVYRLLNVLEFNSTRKRMSVIVRDDDGKLLLLSKGADNVMFERLAKNGRQFEAKTQEHVNQYADAGLRTLVLAYREVDENEYIEFNKSFNEAKASVSEDREALIDEITDKMERDLILLGATAVEDKLQNGVPECIDKLAQAGIKIWVLTGDKMETAINIGFASSLLRQEMKQIIINLETPQIKSLEKSGGKDEIELASRESVVMQLQEGKALLAASGASSEAFALIIDGKSLTYALEDEIKKMFLDLATSCASVICCRSSPKQKALVTRLVKSGTGKTTLAIGDGANDVGMLQEADIGVGISGVEGMQAVMSSDIAIAQFRYLERLLLVHGHWCYSRIASMICYFFYKNITFGVTVFLYEAYTSFSGQPAYNDWFLSLFNVFFSSLPVIALGVFDQDVSARFCYKFPLLYQEGVQNILFSWKRIIGWMFNGFISALAIFFLCKESLKHQLFDPDGKTAGREILGGTMYTCVVWVVNLQMALSISYFTWVQHIVIWGSIAFWYIFLMIYGAMTPSFSTDAYMVFLEALAPAPSYWLTTLFVMIFALIPYFVYKSVQMRFFPKYHQMIQWIRYEGHSNDPEFVEMVRQRSIRPTTVGYTARRAASVRRSARFHDQIYKDLVGV</sequence>
<name>ALA10_ARATH</name>